<comment type="function">
    <text evidence="1">May play a role in DNA repair. It seems to be involved in an RecBC-independent recombinational process of DNA repair. It may act with RecF and RecO.</text>
</comment>
<comment type="similarity">
    <text evidence="1">Belongs to the RecR family.</text>
</comment>
<feature type="chain" id="PRO_1000195393" description="Recombination protein RecR">
    <location>
        <begin position="1"/>
        <end position="201"/>
    </location>
</feature>
<feature type="domain" description="Toprim" evidence="1">
    <location>
        <begin position="81"/>
        <end position="176"/>
    </location>
</feature>
<feature type="zinc finger region" description="C4-type" evidence="1">
    <location>
        <begin position="57"/>
        <end position="72"/>
    </location>
</feature>
<organism>
    <name type="scientific">Glaesserella parasuis serovar 5 (strain SH0165)</name>
    <name type="common">Haemophilus parasuis</name>
    <dbReference type="NCBI Taxonomy" id="557723"/>
    <lineage>
        <taxon>Bacteria</taxon>
        <taxon>Pseudomonadati</taxon>
        <taxon>Pseudomonadota</taxon>
        <taxon>Gammaproteobacteria</taxon>
        <taxon>Pasteurellales</taxon>
        <taxon>Pasteurellaceae</taxon>
        <taxon>Glaesserella</taxon>
    </lineage>
</organism>
<name>RECR_GLAP5</name>
<reference key="1">
    <citation type="journal article" date="2009" name="J. Bacteriol.">
        <title>Complete genome sequence of Haemophilus parasuis SH0165.</title>
        <authorList>
            <person name="Yue M."/>
            <person name="Yang F."/>
            <person name="Yang J."/>
            <person name="Bei W."/>
            <person name="Cai X."/>
            <person name="Chen L."/>
            <person name="Dong J."/>
            <person name="Zhou R."/>
            <person name="Jin M."/>
            <person name="Jin Q."/>
            <person name="Chen H."/>
        </authorList>
    </citation>
    <scope>NUCLEOTIDE SEQUENCE [LARGE SCALE GENOMIC DNA]</scope>
    <source>
        <strain>SH0165</strain>
    </source>
</reference>
<protein>
    <recommendedName>
        <fullName evidence="1">Recombination protein RecR</fullName>
    </recommendedName>
</protein>
<proteinExistence type="inferred from homology"/>
<accession>B8F5Q8</accession>
<dbReference type="EMBL" id="CP001321">
    <property type="protein sequence ID" value="ACL32660.1"/>
    <property type="molecule type" value="Genomic_DNA"/>
</dbReference>
<dbReference type="RefSeq" id="WP_015939588.1">
    <property type="nucleotide sequence ID" value="NC_011852.1"/>
</dbReference>
<dbReference type="SMR" id="B8F5Q8"/>
<dbReference type="STRING" id="557723.HAPS_1041"/>
<dbReference type="KEGG" id="hap:HAPS_1041"/>
<dbReference type="HOGENOM" id="CLU_060739_1_2_6"/>
<dbReference type="Proteomes" id="UP000006743">
    <property type="component" value="Chromosome"/>
</dbReference>
<dbReference type="GO" id="GO:0003677">
    <property type="term" value="F:DNA binding"/>
    <property type="evidence" value="ECO:0007669"/>
    <property type="project" value="UniProtKB-UniRule"/>
</dbReference>
<dbReference type="GO" id="GO:0008270">
    <property type="term" value="F:zinc ion binding"/>
    <property type="evidence" value="ECO:0007669"/>
    <property type="project" value="UniProtKB-KW"/>
</dbReference>
<dbReference type="GO" id="GO:0006310">
    <property type="term" value="P:DNA recombination"/>
    <property type="evidence" value="ECO:0007669"/>
    <property type="project" value="UniProtKB-UniRule"/>
</dbReference>
<dbReference type="GO" id="GO:0006281">
    <property type="term" value="P:DNA repair"/>
    <property type="evidence" value="ECO:0007669"/>
    <property type="project" value="UniProtKB-UniRule"/>
</dbReference>
<dbReference type="CDD" id="cd01025">
    <property type="entry name" value="TOPRIM_recR"/>
    <property type="match status" value="1"/>
</dbReference>
<dbReference type="FunFam" id="1.10.8.420:FF:000001">
    <property type="entry name" value="Recombination protein RecR"/>
    <property type="match status" value="1"/>
</dbReference>
<dbReference type="FunFam" id="3.40.1360.10:FF:000001">
    <property type="entry name" value="Recombination protein RecR"/>
    <property type="match status" value="1"/>
</dbReference>
<dbReference type="Gene3D" id="3.40.1360.10">
    <property type="match status" value="1"/>
</dbReference>
<dbReference type="Gene3D" id="6.10.250.240">
    <property type="match status" value="1"/>
</dbReference>
<dbReference type="Gene3D" id="1.10.8.420">
    <property type="entry name" value="RecR Domain 1"/>
    <property type="match status" value="1"/>
</dbReference>
<dbReference type="HAMAP" id="MF_00017">
    <property type="entry name" value="RecR"/>
    <property type="match status" value="1"/>
</dbReference>
<dbReference type="InterPro" id="IPR000093">
    <property type="entry name" value="DNA_Rcmb_RecR"/>
</dbReference>
<dbReference type="InterPro" id="IPR023627">
    <property type="entry name" value="Rcmb_RecR"/>
</dbReference>
<dbReference type="InterPro" id="IPR015967">
    <property type="entry name" value="Rcmb_RecR_Znf"/>
</dbReference>
<dbReference type="InterPro" id="IPR006171">
    <property type="entry name" value="TOPRIM_dom"/>
</dbReference>
<dbReference type="InterPro" id="IPR034137">
    <property type="entry name" value="TOPRIM_RecR"/>
</dbReference>
<dbReference type="NCBIfam" id="TIGR00615">
    <property type="entry name" value="recR"/>
    <property type="match status" value="1"/>
</dbReference>
<dbReference type="PANTHER" id="PTHR30446">
    <property type="entry name" value="RECOMBINATION PROTEIN RECR"/>
    <property type="match status" value="1"/>
</dbReference>
<dbReference type="PANTHER" id="PTHR30446:SF0">
    <property type="entry name" value="RECOMBINATION PROTEIN RECR"/>
    <property type="match status" value="1"/>
</dbReference>
<dbReference type="Pfam" id="PF21175">
    <property type="entry name" value="RecR_C"/>
    <property type="match status" value="1"/>
</dbReference>
<dbReference type="Pfam" id="PF21176">
    <property type="entry name" value="RecR_HhH"/>
    <property type="match status" value="1"/>
</dbReference>
<dbReference type="Pfam" id="PF02132">
    <property type="entry name" value="RecR_ZnF"/>
    <property type="match status" value="1"/>
</dbReference>
<dbReference type="Pfam" id="PF13662">
    <property type="entry name" value="Toprim_4"/>
    <property type="match status" value="1"/>
</dbReference>
<dbReference type="SMART" id="SM00493">
    <property type="entry name" value="TOPRIM"/>
    <property type="match status" value="1"/>
</dbReference>
<dbReference type="SUPFAM" id="SSF111304">
    <property type="entry name" value="Recombination protein RecR"/>
    <property type="match status" value="1"/>
</dbReference>
<dbReference type="PROSITE" id="PS01300">
    <property type="entry name" value="RECR"/>
    <property type="match status" value="1"/>
</dbReference>
<dbReference type="PROSITE" id="PS50880">
    <property type="entry name" value="TOPRIM"/>
    <property type="match status" value="1"/>
</dbReference>
<gene>
    <name evidence="1" type="primary">recR</name>
    <name type="ordered locus">HAPS_1041</name>
</gene>
<sequence length="201" mass="22124">MQSSPLLENLMEALRVLPGVGPKSAQRMAYHLLQRNRSGGVNLAKALSEAMTHIGHCKSCRTFTEEDECAICQNYRRQISGQLCVVEMPADIQAIEQTGQFSGRYFVLMGHLSPLDGIGPREIGLDLLQKRLEEESFQEVILATNPTIEGDATANYIAEMCSIHNIKVTRIAHGIPVGSELEMVDGTSLSHSFVGRRDISL</sequence>
<keyword id="KW-0227">DNA damage</keyword>
<keyword id="KW-0233">DNA recombination</keyword>
<keyword id="KW-0234">DNA repair</keyword>
<keyword id="KW-0479">Metal-binding</keyword>
<keyword id="KW-1185">Reference proteome</keyword>
<keyword id="KW-0862">Zinc</keyword>
<keyword id="KW-0863">Zinc-finger</keyword>
<evidence type="ECO:0000255" key="1">
    <source>
        <dbReference type="HAMAP-Rule" id="MF_00017"/>
    </source>
</evidence>